<reference key="1">
    <citation type="journal article" date="2007" name="J. Bacteriol.">
        <title>Complete genome sequence of Haemophilus somnus (Histophilus somni) strain 129Pt and comparison to Haemophilus ducreyi 35000HP and Haemophilus influenzae Rd.</title>
        <authorList>
            <person name="Challacombe J.F."/>
            <person name="Duncan A.J."/>
            <person name="Brettin T.S."/>
            <person name="Bruce D."/>
            <person name="Chertkov O."/>
            <person name="Detter J.C."/>
            <person name="Han C.S."/>
            <person name="Misra M."/>
            <person name="Richardson P."/>
            <person name="Tapia R."/>
            <person name="Thayer N."/>
            <person name="Xie G."/>
            <person name="Inzana T.J."/>
        </authorList>
    </citation>
    <scope>NUCLEOTIDE SEQUENCE [LARGE SCALE GENOMIC DNA]</scope>
    <source>
        <strain>129Pt</strain>
    </source>
</reference>
<keyword id="KW-0963">Cytoplasm</keyword>
<keyword id="KW-0378">Hydrolase</keyword>
<keyword id="KW-0694">RNA-binding</keyword>
<keyword id="KW-0820">tRNA-binding</keyword>
<comment type="function">
    <text evidence="1">Hydrolyzes ribosome-free peptidyl-tRNAs (with 1 or more amino acids incorporated), which drop off the ribosome during protein synthesis, or as a result of ribosome stalling.</text>
</comment>
<comment type="function">
    <text evidence="1">Catalyzes the release of premature peptidyl moieties from peptidyl-tRNA molecules trapped in stalled 50S ribosomal subunits, and thus maintains levels of free tRNAs and 50S ribosomes.</text>
</comment>
<comment type="catalytic activity">
    <reaction evidence="1">
        <text>an N-acyl-L-alpha-aminoacyl-tRNA + H2O = an N-acyl-L-amino acid + a tRNA + H(+)</text>
        <dbReference type="Rhea" id="RHEA:54448"/>
        <dbReference type="Rhea" id="RHEA-COMP:10123"/>
        <dbReference type="Rhea" id="RHEA-COMP:13883"/>
        <dbReference type="ChEBI" id="CHEBI:15377"/>
        <dbReference type="ChEBI" id="CHEBI:15378"/>
        <dbReference type="ChEBI" id="CHEBI:59874"/>
        <dbReference type="ChEBI" id="CHEBI:78442"/>
        <dbReference type="ChEBI" id="CHEBI:138191"/>
        <dbReference type="EC" id="3.1.1.29"/>
    </reaction>
</comment>
<comment type="subunit">
    <text evidence="1">Monomer.</text>
</comment>
<comment type="subcellular location">
    <subcellularLocation>
        <location evidence="1">Cytoplasm</location>
    </subcellularLocation>
</comment>
<comment type="similarity">
    <text evidence="1">Belongs to the PTH family.</text>
</comment>
<proteinExistence type="inferred from homology"/>
<organism>
    <name type="scientific">Histophilus somni (strain 129Pt)</name>
    <name type="common">Haemophilus somnus</name>
    <dbReference type="NCBI Taxonomy" id="205914"/>
    <lineage>
        <taxon>Bacteria</taxon>
        <taxon>Pseudomonadati</taxon>
        <taxon>Pseudomonadota</taxon>
        <taxon>Gammaproteobacteria</taxon>
        <taxon>Pasteurellales</taxon>
        <taxon>Pasteurellaceae</taxon>
        <taxon>Histophilus</taxon>
    </lineage>
</organism>
<gene>
    <name evidence="1" type="primary">pth</name>
    <name type="ordered locus">HS_0504</name>
</gene>
<feature type="chain" id="PRO_0000264045" description="Peptidyl-tRNA hydrolase">
    <location>
        <begin position="1"/>
        <end position="194"/>
    </location>
</feature>
<feature type="active site" description="Proton acceptor" evidence="1">
    <location>
        <position position="22"/>
    </location>
</feature>
<feature type="binding site" evidence="1">
    <location>
        <position position="17"/>
    </location>
    <ligand>
        <name>tRNA</name>
        <dbReference type="ChEBI" id="CHEBI:17843"/>
    </ligand>
</feature>
<feature type="binding site" evidence="1">
    <location>
        <position position="68"/>
    </location>
    <ligand>
        <name>tRNA</name>
        <dbReference type="ChEBI" id="CHEBI:17843"/>
    </ligand>
</feature>
<feature type="binding site" evidence="1">
    <location>
        <position position="70"/>
    </location>
    <ligand>
        <name>tRNA</name>
        <dbReference type="ChEBI" id="CHEBI:17843"/>
    </ligand>
</feature>
<feature type="binding site" evidence="1">
    <location>
        <position position="116"/>
    </location>
    <ligand>
        <name>tRNA</name>
        <dbReference type="ChEBI" id="CHEBI:17843"/>
    </ligand>
</feature>
<feature type="site" description="Discriminates between blocked and unblocked aminoacyl-tRNA" evidence="1">
    <location>
        <position position="12"/>
    </location>
</feature>
<feature type="site" description="Stabilizes the basic form of H active site to accept a proton" evidence="1">
    <location>
        <position position="95"/>
    </location>
</feature>
<name>PTH_HISS1</name>
<accession>Q0I248</accession>
<evidence type="ECO:0000255" key="1">
    <source>
        <dbReference type="HAMAP-Rule" id="MF_00083"/>
    </source>
</evidence>
<dbReference type="EC" id="3.1.1.29" evidence="1"/>
<dbReference type="EMBL" id="CP000436">
    <property type="protein sequence ID" value="ABI24781.1"/>
    <property type="molecule type" value="Genomic_DNA"/>
</dbReference>
<dbReference type="SMR" id="Q0I248"/>
<dbReference type="KEGG" id="hso:HS_0504"/>
<dbReference type="eggNOG" id="COG0193">
    <property type="taxonomic scope" value="Bacteria"/>
</dbReference>
<dbReference type="HOGENOM" id="CLU_062456_3_1_6"/>
<dbReference type="GO" id="GO:0005737">
    <property type="term" value="C:cytoplasm"/>
    <property type="evidence" value="ECO:0007669"/>
    <property type="project" value="UniProtKB-SubCell"/>
</dbReference>
<dbReference type="GO" id="GO:0004045">
    <property type="term" value="F:peptidyl-tRNA hydrolase activity"/>
    <property type="evidence" value="ECO:0007669"/>
    <property type="project" value="UniProtKB-UniRule"/>
</dbReference>
<dbReference type="GO" id="GO:0000049">
    <property type="term" value="F:tRNA binding"/>
    <property type="evidence" value="ECO:0007669"/>
    <property type="project" value="UniProtKB-UniRule"/>
</dbReference>
<dbReference type="GO" id="GO:0006515">
    <property type="term" value="P:protein quality control for misfolded or incompletely synthesized proteins"/>
    <property type="evidence" value="ECO:0007669"/>
    <property type="project" value="UniProtKB-UniRule"/>
</dbReference>
<dbReference type="GO" id="GO:0072344">
    <property type="term" value="P:rescue of stalled ribosome"/>
    <property type="evidence" value="ECO:0007669"/>
    <property type="project" value="UniProtKB-UniRule"/>
</dbReference>
<dbReference type="CDD" id="cd00462">
    <property type="entry name" value="PTH"/>
    <property type="match status" value="1"/>
</dbReference>
<dbReference type="FunFam" id="3.40.50.1470:FF:000001">
    <property type="entry name" value="Peptidyl-tRNA hydrolase"/>
    <property type="match status" value="1"/>
</dbReference>
<dbReference type="Gene3D" id="3.40.50.1470">
    <property type="entry name" value="Peptidyl-tRNA hydrolase"/>
    <property type="match status" value="1"/>
</dbReference>
<dbReference type="HAMAP" id="MF_00083">
    <property type="entry name" value="Pept_tRNA_hydro_bact"/>
    <property type="match status" value="1"/>
</dbReference>
<dbReference type="InterPro" id="IPR001328">
    <property type="entry name" value="Pept_tRNA_hydro"/>
</dbReference>
<dbReference type="InterPro" id="IPR018171">
    <property type="entry name" value="Pept_tRNA_hydro_CS"/>
</dbReference>
<dbReference type="InterPro" id="IPR036416">
    <property type="entry name" value="Pept_tRNA_hydro_sf"/>
</dbReference>
<dbReference type="NCBIfam" id="TIGR00447">
    <property type="entry name" value="pth"/>
    <property type="match status" value="1"/>
</dbReference>
<dbReference type="PANTHER" id="PTHR17224">
    <property type="entry name" value="PEPTIDYL-TRNA HYDROLASE"/>
    <property type="match status" value="1"/>
</dbReference>
<dbReference type="PANTHER" id="PTHR17224:SF1">
    <property type="entry name" value="PEPTIDYL-TRNA HYDROLASE"/>
    <property type="match status" value="1"/>
</dbReference>
<dbReference type="Pfam" id="PF01195">
    <property type="entry name" value="Pept_tRNA_hydro"/>
    <property type="match status" value="1"/>
</dbReference>
<dbReference type="SUPFAM" id="SSF53178">
    <property type="entry name" value="Peptidyl-tRNA hydrolase-like"/>
    <property type="match status" value="1"/>
</dbReference>
<dbReference type="PROSITE" id="PS01195">
    <property type="entry name" value="PEPT_TRNA_HYDROL_1"/>
    <property type="match status" value="1"/>
</dbReference>
<dbReference type="PROSITE" id="PS01196">
    <property type="entry name" value="PEPT_TRNA_HYDROL_2"/>
    <property type="match status" value="1"/>
</dbReference>
<sequence length="194" mass="21433">MSEIKLIVGLGNPGDKYADTRHNAGEWLIERLARRFNFNLSVESKFSGKTARAVISGQEMRFLVPTTFMNLSGKAVSALANFYRIPPEQILVLHDELDFSPGIAKIKQGGGHGGHNGLKDIIAQLANNKNFYRLRIGIGHPGDKNLVASYVLNKPSPTDRQLIDRSLEEATDCIEILMKEGITKATNRLNAFKA</sequence>
<protein>
    <recommendedName>
        <fullName evidence="1">Peptidyl-tRNA hydrolase</fullName>
        <shortName evidence="1">Pth</shortName>
        <ecNumber evidence="1">3.1.1.29</ecNumber>
    </recommendedName>
</protein>